<accession>Q65IV4</accession>
<accession>Q62UB2</accession>
<comment type="function">
    <text evidence="1">Catalyzes the reduction of arsenate [As(V)] to arsenite [As(III)].</text>
</comment>
<comment type="catalytic activity">
    <reaction evidence="1">
        <text>arsenate + [thioredoxin]-dithiol + H(+) = arsenite + [thioredoxin]-disulfide + H2O</text>
        <dbReference type="Rhea" id="RHEA:43848"/>
        <dbReference type="Rhea" id="RHEA-COMP:10698"/>
        <dbReference type="Rhea" id="RHEA-COMP:10700"/>
        <dbReference type="ChEBI" id="CHEBI:15377"/>
        <dbReference type="ChEBI" id="CHEBI:15378"/>
        <dbReference type="ChEBI" id="CHEBI:29242"/>
        <dbReference type="ChEBI" id="CHEBI:29950"/>
        <dbReference type="ChEBI" id="CHEBI:48597"/>
        <dbReference type="ChEBI" id="CHEBI:50058"/>
        <dbReference type="EC" id="1.20.4.4"/>
    </reaction>
</comment>
<comment type="subcellular location">
    <subcellularLocation>
        <location evidence="1">Cytoplasm</location>
    </subcellularLocation>
</comment>
<comment type="similarity">
    <text evidence="1">Belongs to the low molecular weight phosphotyrosine protein phosphatase family. Thioredoxin-coupled ArsC subfamily.</text>
</comment>
<sequence>MSKKTIYFLCTGNSCRSQMAEGWAKKHLGDEWNVYSAGIEAHGLNPNAVKAMREAGIDISEQTSDIIDPDILHNADLVITLCGDAADKCPMTPPHVKREHWGFDDPAKAEGTEEEKWAFFQRVRDEIGERIKRFAETGE</sequence>
<reference key="1">
    <citation type="journal article" date="2004" name="J. Mol. Microbiol. Biotechnol.">
        <title>The complete genome sequence of Bacillus licheniformis DSM13, an organism with great industrial potential.</title>
        <authorList>
            <person name="Veith B."/>
            <person name="Herzberg C."/>
            <person name="Steckel S."/>
            <person name="Feesche J."/>
            <person name="Maurer K.H."/>
            <person name="Ehrenreich P."/>
            <person name="Baeumer S."/>
            <person name="Henne A."/>
            <person name="Liesegang H."/>
            <person name="Merkl R."/>
            <person name="Ehrenreich A."/>
            <person name="Gottschalk G."/>
        </authorList>
    </citation>
    <scope>NUCLEOTIDE SEQUENCE [LARGE SCALE GENOMIC DNA]</scope>
    <source>
        <strain>ATCC 14580 / DSM 13 / JCM 2505 / CCUG 7422 / NBRC 12200 / NCIMB 9375 / NCTC 10341 / NRRL NRS-1264 / Gibson 46</strain>
    </source>
</reference>
<reference key="2">
    <citation type="journal article" date="2004" name="Genome Biol.">
        <title>Complete genome sequence of the industrial bacterium Bacillus licheniformis and comparisons with closely related Bacillus species.</title>
        <authorList>
            <person name="Rey M.W."/>
            <person name="Ramaiya P."/>
            <person name="Nelson B.A."/>
            <person name="Brody-Karpin S.D."/>
            <person name="Zaretsky E.J."/>
            <person name="Tang M."/>
            <person name="Lopez de Leon A."/>
            <person name="Xiang H."/>
            <person name="Gusti V."/>
            <person name="Clausen I.G."/>
            <person name="Olsen P.B."/>
            <person name="Rasmussen M.D."/>
            <person name="Andersen J.T."/>
            <person name="Joergensen P.L."/>
            <person name="Larsen T.S."/>
            <person name="Sorokin A."/>
            <person name="Bolotin A."/>
            <person name="Lapidus A."/>
            <person name="Galleron N."/>
            <person name="Ehrlich S.D."/>
            <person name="Berka R.M."/>
        </authorList>
    </citation>
    <scope>NUCLEOTIDE SEQUENCE [LARGE SCALE GENOMIC DNA]</scope>
    <source>
        <strain>ATCC 14580 / DSM 13 / JCM 2505 / CCUG 7422 / NBRC 12200 / NCIMB 9375 / NCTC 10341 / NRRL NRS-1264 / Gibson 46</strain>
    </source>
</reference>
<keyword id="KW-0059">Arsenical resistance</keyword>
<keyword id="KW-0963">Cytoplasm</keyword>
<keyword id="KW-1015">Disulfide bond</keyword>
<keyword id="KW-0560">Oxidoreductase</keyword>
<keyword id="KW-0676">Redox-active center</keyword>
<keyword id="KW-1185">Reference proteome</keyword>
<proteinExistence type="inferred from homology"/>
<evidence type="ECO:0000255" key="1">
    <source>
        <dbReference type="HAMAP-Rule" id="MF_01624"/>
    </source>
</evidence>
<feature type="chain" id="PRO_0000162518" description="Arsenate reductase">
    <location>
        <begin position="1"/>
        <end position="139"/>
    </location>
</feature>
<feature type="active site" description="Nucleophile" evidence="1">
    <location>
        <position position="10"/>
    </location>
</feature>
<feature type="active site" description="Nucleophile" evidence="1">
    <location>
        <position position="82"/>
    </location>
</feature>
<feature type="active site" description="Nucleophile" evidence="1">
    <location>
        <position position="89"/>
    </location>
</feature>
<feature type="disulfide bond" description="Redox-active; alternate" evidence="1">
    <location>
        <begin position="10"/>
        <end position="82"/>
    </location>
</feature>
<feature type="disulfide bond" description="Redox-active; alternate" evidence="1">
    <location>
        <begin position="82"/>
        <end position="89"/>
    </location>
</feature>
<protein>
    <recommendedName>
        <fullName evidence="1">Arsenate reductase</fullName>
        <ecNumber evidence="1">1.20.4.4</ecNumber>
    </recommendedName>
</protein>
<organism>
    <name type="scientific">Bacillus licheniformis (strain ATCC 14580 / DSM 13 / JCM 2505 / CCUG 7422 / NBRC 12200 / NCIMB 9375 / NCTC 10341 / NRRL NRS-1264 / Gibson 46)</name>
    <dbReference type="NCBI Taxonomy" id="279010"/>
    <lineage>
        <taxon>Bacteria</taxon>
        <taxon>Bacillati</taxon>
        <taxon>Bacillota</taxon>
        <taxon>Bacilli</taxon>
        <taxon>Bacillales</taxon>
        <taxon>Bacillaceae</taxon>
        <taxon>Bacillus</taxon>
    </lineage>
</organism>
<dbReference type="EC" id="1.20.4.4" evidence="1"/>
<dbReference type="EMBL" id="AE017333">
    <property type="protein sequence ID" value="AAU41010.1"/>
    <property type="molecule type" value="Genomic_DNA"/>
</dbReference>
<dbReference type="EMBL" id="CP000002">
    <property type="protein sequence ID" value="AAU23647.1"/>
    <property type="molecule type" value="Genomic_DNA"/>
</dbReference>
<dbReference type="RefSeq" id="WP_003182412.1">
    <property type="nucleotide sequence ID" value="NC_006322.1"/>
</dbReference>
<dbReference type="SMR" id="Q65IV4"/>
<dbReference type="STRING" id="279010.BL01871"/>
<dbReference type="GeneID" id="92861286"/>
<dbReference type="KEGG" id="bld:BLi02122"/>
<dbReference type="KEGG" id="bli:BL01871"/>
<dbReference type="eggNOG" id="COG0394">
    <property type="taxonomic scope" value="Bacteria"/>
</dbReference>
<dbReference type="HOGENOM" id="CLU_071415_3_2_9"/>
<dbReference type="Proteomes" id="UP000000606">
    <property type="component" value="Chromosome"/>
</dbReference>
<dbReference type="GO" id="GO:0005737">
    <property type="term" value="C:cytoplasm"/>
    <property type="evidence" value="ECO:0007669"/>
    <property type="project" value="UniProtKB-SubCell"/>
</dbReference>
<dbReference type="GO" id="GO:0030612">
    <property type="term" value="F:arsenate reductase (thioredoxin) activity"/>
    <property type="evidence" value="ECO:0007669"/>
    <property type="project" value="UniProtKB-UniRule"/>
</dbReference>
<dbReference type="GO" id="GO:0004725">
    <property type="term" value="F:protein tyrosine phosphatase activity"/>
    <property type="evidence" value="ECO:0007669"/>
    <property type="project" value="InterPro"/>
</dbReference>
<dbReference type="GO" id="GO:0046685">
    <property type="term" value="P:response to arsenic-containing substance"/>
    <property type="evidence" value="ECO:0007669"/>
    <property type="project" value="UniProtKB-KW"/>
</dbReference>
<dbReference type="CDD" id="cd16345">
    <property type="entry name" value="LMWP_ArsC"/>
    <property type="match status" value="1"/>
</dbReference>
<dbReference type="FunFam" id="3.40.50.2300:FF:000237">
    <property type="entry name" value="Arsenate reductase"/>
    <property type="match status" value="1"/>
</dbReference>
<dbReference type="Gene3D" id="3.40.50.2300">
    <property type="match status" value="1"/>
</dbReference>
<dbReference type="HAMAP" id="MF_01624">
    <property type="entry name" value="Arsenate_reduct"/>
    <property type="match status" value="1"/>
</dbReference>
<dbReference type="InterPro" id="IPR014064">
    <property type="entry name" value="Arsenate_reductase_ArsC"/>
</dbReference>
<dbReference type="InterPro" id="IPR023485">
    <property type="entry name" value="Ptyr_pPase"/>
</dbReference>
<dbReference type="InterPro" id="IPR036196">
    <property type="entry name" value="Ptyr_pPase_sf"/>
</dbReference>
<dbReference type="NCBIfam" id="TIGR02691">
    <property type="entry name" value="arsC_pI258_fam"/>
    <property type="match status" value="1"/>
</dbReference>
<dbReference type="NCBIfam" id="NF010053">
    <property type="entry name" value="PRK13530.1"/>
    <property type="match status" value="1"/>
</dbReference>
<dbReference type="PANTHER" id="PTHR43428">
    <property type="entry name" value="ARSENATE REDUCTASE"/>
    <property type="match status" value="1"/>
</dbReference>
<dbReference type="PANTHER" id="PTHR43428:SF1">
    <property type="entry name" value="ARSENATE REDUCTASE"/>
    <property type="match status" value="1"/>
</dbReference>
<dbReference type="Pfam" id="PF01451">
    <property type="entry name" value="LMWPc"/>
    <property type="match status" value="1"/>
</dbReference>
<dbReference type="SMART" id="SM00226">
    <property type="entry name" value="LMWPc"/>
    <property type="match status" value="1"/>
</dbReference>
<dbReference type="SUPFAM" id="SSF52788">
    <property type="entry name" value="Phosphotyrosine protein phosphatases I"/>
    <property type="match status" value="1"/>
</dbReference>
<name>ARSC_BACLD</name>
<gene>
    <name evidence="1" type="primary">arsC</name>
    <name type="ordered locus">BLi02122</name>
    <name type="ordered locus">BL01871</name>
</gene>